<organism>
    <name type="scientific">Tolumonas auensis (strain DSM 9187 / NBRC 110442 / TA 4)</name>
    <dbReference type="NCBI Taxonomy" id="595494"/>
    <lineage>
        <taxon>Bacteria</taxon>
        <taxon>Pseudomonadati</taxon>
        <taxon>Pseudomonadota</taxon>
        <taxon>Gammaproteobacteria</taxon>
        <taxon>Aeromonadales</taxon>
        <taxon>Aeromonadaceae</taxon>
        <taxon>Tolumonas</taxon>
    </lineage>
</organism>
<keyword id="KW-0021">Allosteric enzyme</keyword>
<keyword id="KW-0067">ATP-binding</keyword>
<keyword id="KW-0963">Cytoplasm</keyword>
<keyword id="KW-0324">Glycolysis</keyword>
<keyword id="KW-0418">Kinase</keyword>
<keyword id="KW-0460">Magnesium</keyword>
<keyword id="KW-0479">Metal-binding</keyword>
<keyword id="KW-0547">Nucleotide-binding</keyword>
<keyword id="KW-1185">Reference proteome</keyword>
<keyword id="KW-0808">Transferase</keyword>
<dbReference type="EC" id="2.7.1.11" evidence="1"/>
<dbReference type="EMBL" id="CP001616">
    <property type="protein sequence ID" value="ACQ93072.1"/>
    <property type="molecule type" value="Genomic_DNA"/>
</dbReference>
<dbReference type="RefSeq" id="WP_015878544.1">
    <property type="nucleotide sequence ID" value="NC_012691.1"/>
</dbReference>
<dbReference type="SMR" id="C4LEQ5"/>
<dbReference type="STRING" id="595494.Tola_1457"/>
<dbReference type="KEGG" id="tau:Tola_1457"/>
<dbReference type="eggNOG" id="COG0205">
    <property type="taxonomic scope" value="Bacteria"/>
</dbReference>
<dbReference type="HOGENOM" id="CLU_020655_0_1_6"/>
<dbReference type="OrthoDB" id="9802503at2"/>
<dbReference type="UniPathway" id="UPA00109">
    <property type="reaction ID" value="UER00182"/>
</dbReference>
<dbReference type="Proteomes" id="UP000009073">
    <property type="component" value="Chromosome"/>
</dbReference>
<dbReference type="GO" id="GO:0005945">
    <property type="term" value="C:6-phosphofructokinase complex"/>
    <property type="evidence" value="ECO:0007669"/>
    <property type="project" value="TreeGrafter"/>
</dbReference>
<dbReference type="GO" id="GO:0003872">
    <property type="term" value="F:6-phosphofructokinase activity"/>
    <property type="evidence" value="ECO:0007669"/>
    <property type="project" value="UniProtKB-UniRule"/>
</dbReference>
<dbReference type="GO" id="GO:0016208">
    <property type="term" value="F:AMP binding"/>
    <property type="evidence" value="ECO:0007669"/>
    <property type="project" value="TreeGrafter"/>
</dbReference>
<dbReference type="GO" id="GO:0005524">
    <property type="term" value="F:ATP binding"/>
    <property type="evidence" value="ECO:0007669"/>
    <property type="project" value="UniProtKB-KW"/>
</dbReference>
<dbReference type="GO" id="GO:0070095">
    <property type="term" value="F:fructose-6-phosphate binding"/>
    <property type="evidence" value="ECO:0007669"/>
    <property type="project" value="TreeGrafter"/>
</dbReference>
<dbReference type="GO" id="GO:0042802">
    <property type="term" value="F:identical protein binding"/>
    <property type="evidence" value="ECO:0007669"/>
    <property type="project" value="TreeGrafter"/>
</dbReference>
<dbReference type="GO" id="GO:0046872">
    <property type="term" value="F:metal ion binding"/>
    <property type="evidence" value="ECO:0007669"/>
    <property type="project" value="UniProtKB-KW"/>
</dbReference>
<dbReference type="GO" id="GO:0048029">
    <property type="term" value="F:monosaccharide binding"/>
    <property type="evidence" value="ECO:0007669"/>
    <property type="project" value="TreeGrafter"/>
</dbReference>
<dbReference type="GO" id="GO:0061621">
    <property type="term" value="P:canonical glycolysis"/>
    <property type="evidence" value="ECO:0007669"/>
    <property type="project" value="TreeGrafter"/>
</dbReference>
<dbReference type="GO" id="GO:0030388">
    <property type="term" value="P:fructose 1,6-bisphosphate metabolic process"/>
    <property type="evidence" value="ECO:0007669"/>
    <property type="project" value="TreeGrafter"/>
</dbReference>
<dbReference type="GO" id="GO:0006002">
    <property type="term" value="P:fructose 6-phosphate metabolic process"/>
    <property type="evidence" value="ECO:0007669"/>
    <property type="project" value="InterPro"/>
</dbReference>
<dbReference type="FunFam" id="3.40.50.450:FF:000001">
    <property type="entry name" value="ATP-dependent 6-phosphofructokinase"/>
    <property type="match status" value="1"/>
</dbReference>
<dbReference type="FunFam" id="3.40.50.460:FF:000002">
    <property type="entry name" value="ATP-dependent 6-phosphofructokinase"/>
    <property type="match status" value="1"/>
</dbReference>
<dbReference type="Gene3D" id="3.40.50.450">
    <property type="match status" value="1"/>
</dbReference>
<dbReference type="Gene3D" id="3.40.50.460">
    <property type="entry name" value="Phosphofructokinase domain"/>
    <property type="match status" value="1"/>
</dbReference>
<dbReference type="HAMAP" id="MF_00339">
    <property type="entry name" value="Phosphofructokinase_I_B1"/>
    <property type="match status" value="1"/>
</dbReference>
<dbReference type="InterPro" id="IPR022953">
    <property type="entry name" value="ATP_PFK"/>
</dbReference>
<dbReference type="InterPro" id="IPR012003">
    <property type="entry name" value="ATP_PFK_prok-type"/>
</dbReference>
<dbReference type="InterPro" id="IPR012828">
    <property type="entry name" value="PFKA_ATP_prok"/>
</dbReference>
<dbReference type="InterPro" id="IPR015912">
    <property type="entry name" value="Phosphofructokinase_CS"/>
</dbReference>
<dbReference type="InterPro" id="IPR000023">
    <property type="entry name" value="Phosphofructokinase_dom"/>
</dbReference>
<dbReference type="InterPro" id="IPR035966">
    <property type="entry name" value="PKF_sf"/>
</dbReference>
<dbReference type="NCBIfam" id="TIGR02482">
    <property type="entry name" value="PFKA_ATP"/>
    <property type="match status" value="1"/>
</dbReference>
<dbReference type="NCBIfam" id="NF002872">
    <property type="entry name" value="PRK03202.1"/>
    <property type="match status" value="1"/>
</dbReference>
<dbReference type="PANTHER" id="PTHR13697:SF4">
    <property type="entry name" value="ATP-DEPENDENT 6-PHOSPHOFRUCTOKINASE"/>
    <property type="match status" value="1"/>
</dbReference>
<dbReference type="PANTHER" id="PTHR13697">
    <property type="entry name" value="PHOSPHOFRUCTOKINASE"/>
    <property type="match status" value="1"/>
</dbReference>
<dbReference type="Pfam" id="PF00365">
    <property type="entry name" value="PFK"/>
    <property type="match status" value="1"/>
</dbReference>
<dbReference type="PIRSF" id="PIRSF000532">
    <property type="entry name" value="ATP_PFK_prok"/>
    <property type="match status" value="1"/>
</dbReference>
<dbReference type="PRINTS" id="PR00476">
    <property type="entry name" value="PHFRCTKINASE"/>
</dbReference>
<dbReference type="SUPFAM" id="SSF53784">
    <property type="entry name" value="Phosphofructokinase"/>
    <property type="match status" value="1"/>
</dbReference>
<dbReference type="PROSITE" id="PS00433">
    <property type="entry name" value="PHOSPHOFRUCTOKINASE"/>
    <property type="match status" value="1"/>
</dbReference>
<proteinExistence type="inferred from homology"/>
<accession>C4LEQ5</accession>
<protein>
    <recommendedName>
        <fullName evidence="1">ATP-dependent 6-phosphofructokinase</fullName>
        <shortName evidence="1">ATP-PFK</shortName>
        <shortName evidence="1">Phosphofructokinase</shortName>
        <ecNumber evidence="1">2.7.1.11</ecNumber>
    </recommendedName>
    <alternativeName>
        <fullName evidence="1">Phosphohexokinase</fullName>
    </alternativeName>
</protein>
<evidence type="ECO:0000255" key="1">
    <source>
        <dbReference type="HAMAP-Rule" id="MF_00339"/>
    </source>
</evidence>
<reference key="1">
    <citation type="submission" date="2009-05" db="EMBL/GenBank/DDBJ databases">
        <title>Complete sequence of Tolumonas auensis DSM 9187.</title>
        <authorList>
            <consortium name="US DOE Joint Genome Institute"/>
            <person name="Lucas S."/>
            <person name="Copeland A."/>
            <person name="Lapidus A."/>
            <person name="Glavina del Rio T."/>
            <person name="Tice H."/>
            <person name="Bruce D."/>
            <person name="Goodwin L."/>
            <person name="Pitluck S."/>
            <person name="Chertkov O."/>
            <person name="Brettin T."/>
            <person name="Detter J.C."/>
            <person name="Han C."/>
            <person name="Larimer F."/>
            <person name="Land M."/>
            <person name="Hauser L."/>
            <person name="Kyrpides N."/>
            <person name="Mikhailova N."/>
            <person name="Spring S."/>
            <person name="Beller H."/>
        </authorList>
    </citation>
    <scope>NUCLEOTIDE SEQUENCE [LARGE SCALE GENOMIC DNA]</scope>
    <source>
        <strain>DSM 9187 / NBRC 110442 / TA 4</strain>
    </source>
</reference>
<name>PFKA_TOLAT</name>
<gene>
    <name evidence="1" type="primary">pfkA</name>
    <name type="ordered locus">Tola_1457</name>
</gene>
<sequence length="320" mass="34564">MIKKIGVLTSGGDAPGMNAAIRSVIRAALAKGIEVYGIHDGYLGLHRDRIEKLERRSVSDIINRGGTMLGSARFPAFKEESVRREAIANLNKHGIEALVVIGGDGSYMGAKKLTEMGYPCIGLPGTIDNDIAGTDFTIGFDTALNVVMEAIDRLRDTSTSHKRISVVEVMGRHCGDLAMAAAVAGGAEFVIVPEKGFKKEDLLANIDEGIASGKRHAIITICEHVTDVNALANLIELHTGLETRATILGHIQRGGSPTARDRILASRMGAYAVDLLIEGQGGRCIGLQRNELVHHDIIDCIENMKRPFNEELYNLTKILF</sequence>
<feature type="chain" id="PRO_1000205253" description="ATP-dependent 6-phosphofructokinase">
    <location>
        <begin position="1"/>
        <end position="320"/>
    </location>
</feature>
<feature type="active site" description="Proton acceptor" evidence="1">
    <location>
        <position position="128"/>
    </location>
</feature>
<feature type="binding site" evidence="1">
    <location>
        <position position="12"/>
    </location>
    <ligand>
        <name>ATP</name>
        <dbReference type="ChEBI" id="CHEBI:30616"/>
    </ligand>
</feature>
<feature type="binding site" evidence="1">
    <location>
        <begin position="22"/>
        <end position="26"/>
    </location>
    <ligand>
        <name>ADP</name>
        <dbReference type="ChEBI" id="CHEBI:456216"/>
        <note>allosteric activator; ligand shared between dimeric partners</note>
    </ligand>
</feature>
<feature type="binding site" evidence="1">
    <location>
        <begin position="73"/>
        <end position="74"/>
    </location>
    <ligand>
        <name>ATP</name>
        <dbReference type="ChEBI" id="CHEBI:30616"/>
    </ligand>
</feature>
<feature type="binding site" evidence="1">
    <location>
        <begin position="103"/>
        <end position="106"/>
    </location>
    <ligand>
        <name>ATP</name>
        <dbReference type="ChEBI" id="CHEBI:30616"/>
    </ligand>
</feature>
<feature type="binding site" evidence="1">
    <location>
        <position position="104"/>
    </location>
    <ligand>
        <name>Mg(2+)</name>
        <dbReference type="ChEBI" id="CHEBI:18420"/>
        <note>catalytic</note>
    </ligand>
</feature>
<feature type="binding site" description="in other chain" evidence="1">
    <location>
        <begin position="126"/>
        <end position="128"/>
    </location>
    <ligand>
        <name>substrate</name>
        <note>ligand shared between dimeric partners</note>
    </ligand>
</feature>
<feature type="binding site" description="in other chain" evidence="1">
    <location>
        <position position="155"/>
    </location>
    <ligand>
        <name>ADP</name>
        <dbReference type="ChEBI" id="CHEBI:456216"/>
        <note>allosteric activator; ligand shared between dimeric partners</note>
    </ligand>
</feature>
<feature type="binding site" evidence="1">
    <location>
        <position position="163"/>
    </location>
    <ligand>
        <name>substrate</name>
        <note>ligand shared between dimeric partners</note>
    </ligand>
</feature>
<feature type="binding site" description="in other chain" evidence="1">
    <location>
        <begin position="170"/>
        <end position="172"/>
    </location>
    <ligand>
        <name>substrate</name>
        <note>ligand shared between dimeric partners</note>
    </ligand>
</feature>
<feature type="binding site" description="in other chain" evidence="1">
    <location>
        <begin position="186"/>
        <end position="188"/>
    </location>
    <ligand>
        <name>ADP</name>
        <dbReference type="ChEBI" id="CHEBI:456216"/>
        <note>allosteric activator; ligand shared between dimeric partners</note>
    </ligand>
</feature>
<feature type="binding site" description="in other chain" evidence="1">
    <location>
        <begin position="214"/>
        <end position="216"/>
    </location>
    <ligand>
        <name>ADP</name>
        <dbReference type="ChEBI" id="CHEBI:456216"/>
        <note>allosteric activator; ligand shared between dimeric partners</note>
    </ligand>
</feature>
<feature type="binding site" description="in other chain" evidence="1">
    <location>
        <position position="223"/>
    </location>
    <ligand>
        <name>substrate</name>
        <note>ligand shared between dimeric partners</note>
    </ligand>
</feature>
<feature type="binding site" evidence="1">
    <location>
        <position position="244"/>
    </location>
    <ligand>
        <name>substrate</name>
        <note>ligand shared between dimeric partners</note>
    </ligand>
</feature>
<feature type="binding site" description="in other chain" evidence="1">
    <location>
        <begin position="250"/>
        <end position="253"/>
    </location>
    <ligand>
        <name>substrate</name>
        <note>ligand shared between dimeric partners</note>
    </ligand>
</feature>
<comment type="function">
    <text evidence="1">Catalyzes the phosphorylation of D-fructose 6-phosphate to fructose 1,6-bisphosphate by ATP, the first committing step of glycolysis.</text>
</comment>
<comment type="catalytic activity">
    <reaction evidence="1">
        <text>beta-D-fructose 6-phosphate + ATP = beta-D-fructose 1,6-bisphosphate + ADP + H(+)</text>
        <dbReference type="Rhea" id="RHEA:16109"/>
        <dbReference type="ChEBI" id="CHEBI:15378"/>
        <dbReference type="ChEBI" id="CHEBI:30616"/>
        <dbReference type="ChEBI" id="CHEBI:32966"/>
        <dbReference type="ChEBI" id="CHEBI:57634"/>
        <dbReference type="ChEBI" id="CHEBI:456216"/>
        <dbReference type="EC" id="2.7.1.11"/>
    </reaction>
</comment>
<comment type="cofactor">
    <cofactor evidence="1">
        <name>Mg(2+)</name>
        <dbReference type="ChEBI" id="CHEBI:18420"/>
    </cofactor>
</comment>
<comment type="activity regulation">
    <text evidence="1">Allosterically activated by ADP and other diphosphonucleosides, and allosterically inhibited by phosphoenolpyruvate.</text>
</comment>
<comment type="pathway">
    <text evidence="1">Carbohydrate degradation; glycolysis; D-glyceraldehyde 3-phosphate and glycerone phosphate from D-glucose: step 3/4.</text>
</comment>
<comment type="subunit">
    <text evidence="1">Homotetramer.</text>
</comment>
<comment type="subcellular location">
    <subcellularLocation>
        <location evidence="1">Cytoplasm</location>
    </subcellularLocation>
</comment>
<comment type="similarity">
    <text evidence="1">Belongs to the phosphofructokinase type A (PFKA) family. ATP-dependent PFK group I subfamily. Prokaryotic clade 'B1' sub-subfamily.</text>
</comment>